<name>MPAP1_PHAAQ</name>
<evidence type="ECO:0000255" key="1"/>
<evidence type="ECO:0000255" key="2">
    <source>
        <dbReference type="PROSITE-ProRule" id="PRU00078"/>
    </source>
</evidence>
<evidence type="ECO:0000255" key="3">
    <source>
        <dbReference type="PROSITE-ProRule" id="PRU00079"/>
    </source>
</evidence>
<evidence type="ECO:0000269" key="4">
    <source>
    </source>
</evidence>
<evidence type="ECO:0000305" key="5"/>
<reference key="1">
    <citation type="journal article" date="1995" name="Clin. Exp. Allergy">
        <title>Cloning, sequencing and expression in Escherichia coli of Pha a 1 and four isoforms of Pha a 5, the major allergens of canary grass pollen.</title>
        <authorList>
            <person name="Suphioglu C."/>
            <person name="Singh M.B."/>
        </authorList>
    </citation>
    <scope>NUCLEOTIDE SEQUENCE [MRNA]</scope>
    <source>
        <tissue>Pollen</tissue>
    </source>
</reference>
<reference key="2">
    <citation type="journal article" date="1993" name="Allergy">
        <title>Identification of canary grass (Phalaris aquatica) pollen allergens by immunoblotting: IgE and IgG antibody-binding studies.</title>
        <authorList>
            <person name="Suphioglu C."/>
            <person name="Singh M.B."/>
            <person name="Simpson R.J."/>
            <person name="Ward L.D."/>
            <person name="Knox R.B."/>
        </authorList>
    </citation>
    <scope>PROTEIN SEQUENCE OF 30-49</scope>
    <scope>ALLERGEN</scope>
</reference>
<protein>
    <recommendedName>
        <fullName>Major pollen allergen Pha a 1</fullName>
    </recommendedName>
    <alternativeName>
        <fullName>Allergen Pha a I</fullName>
    </alternativeName>
    <allergenName>Pha a 1</allergenName>
</protein>
<proteinExistence type="evidence at protein level"/>
<sequence length="269" mass="29011">MMKMVCSSSSSSLLVVAALLAVFVGSAQGIAKVPPGPNITAEYGDKWLDAKSTWYGKPTGAGPKDNGGACGYKDVDKAPFNGMTGCGNTPIFKDGRGCGSCFELKCSKPESCSGEPITVHITDDNEEPIAPYHFDLSGHAFGSMAKKGEEENVRGAGELELQFRRVKCKYPDGTKPTFHVEKGSNPNYLALLVKYVDGDGDVVAVDIKEKGKDKWIELKESWGAIWRIDTPDKLTGPFTVRYTTEGGTKAEFEDVIPEGWKADTHDASK</sequence>
<organism>
    <name type="scientific">Phalaris aquatica</name>
    <name type="common">Canary grass</name>
    <dbReference type="NCBI Taxonomy" id="28479"/>
    <lineage>
        <taxon>Eukaryota</taxon>
        <taxon>Viridiplantae</taxon>
        <taxon>Streptophyta</taxon>
        <taxon>Embryophyta</taxon>
        <taxon>Tracheophyta</taxon>
        <taxon>Spermatophyta</taxon>
        <taxon>Magnoliopsida</taxon>
        <taxon>Liliopsida</taxon>
        <taxon>Poales</taxon>
        <taxon>Poaceae</taxon>
        <taxon>BOP clade</taxon>
        <taxon>Pooideae</taxon>
        <taxon>Poodae</taxon>
        <taxon>Poeae</taxon>
        <taxon>Poeae Chloroplast Group 1 (Aveneae type)</taxon>
        <taxon>Phalaridinae</taxon>
        <taxon>Phalaris</taxon>
    </lineage>
</organism>
<accession>Q41260</accession>
<feature type="signal peptide" evidence="4">
    <location>
        <begin position="1"/>
        <end position="29"/>
    </location>
</feature>
<feature type="chain" id="PRO_0000008718" description="Major pollen allergen Pha a 1">
    <location>
        <begin position="30"/>
        <end position="269"/>
    </location>
</feature>
<feature type="domain" description="Expansin-like EG45" evidence="3">
    <location>
        <begin position="67"/>
        <end position="173"/>
    </location>
</feature>
<feature type="domain" description="Expansin-like CBD" evidence="2">
    <location>
        <begin position="187"/>
        <end position="268"/>
    </location>
</feature>
<feature type="glycosylation site" description="N-linked (GlcNAc...) asparagine" evidence="1">
    <location>
        <position position="38"/>
    </location>
</feature>
<feature type="sequence conflict" description="In Ref. 2; AA sequence." evidence="5" ref="2">
    <original>P</original>
    <variation>G</variation>
    <location>
        <position position="37"/>
    </location>
</feature>
<keyword id="KW-0020">Allergen</keyword>
<keyword id="KW-0903">Direct protein sequencing</keyword>
<keyword id="KW-0325">Glycoprotein</keyword>
<keyword id="KW-0964">Secreted</keyword>
<keyword id="KW-0732">Signal</keyword>
<dbReference type="EMBL" id="S80654">
    <property type="protein sequence ID" value="AAB35984.1"/>
    <property type="molecule type" value="mRNA"/>
</dbReference>
<dbReference type="SMR" id="Q41260"/>
<dbReference type="Allergome" id="3486">
    <property type="allergen name" value="Pha a 1.0101"/>
</dbReference>
<dbReference type="Allergome" id="547">
    <property type="allergen name" value="Pha a 1"/>
</dbReference>
<dbReference type="GO" id="GO:0005576">
    <property type="term" value="C:extracellular region"/>
    <property type="evidence" value="ECO:0007669"/>
    <property type="project" value="UniProtKB-SubCell"/>
</dbReference>
<dbReference type="GO" id="GO:0009828">
    <property type="term" value="P:plant-type cell wall loosening"/>
    <property type="evidence" value="ECO:0000250"/>
    <property type="project" value="UniProtKB"/>
</dbReference>
<dbReference type="GO" id="GO:0019953">
    <property type="term" value="P:sexual reproduction"/>
    <property type="evidence" value="ECO:0007669"/>
    <property type="project" value="InterPro"/>
</dbReference>
<dbReference type="CDD" id="cd22275">
    <property type="entry name" value="DPBB_EXPB_N"/>
    <property type="match status" value="1"/>
</dbReference>
<dbReference type="Gene3D" id="2.60.40.760">
    <property type="entry name" value="Expansin, cellulose-binding-like domain"/>
    <property type="match status" value="1"/>
</dbReference>
<dbReference type="Gene3D" id="2.40.40.10">
    <property type="entry name" value="RlpA-like domain"/>
    <property type="match status" value="1"/>
</dbReference>
<dbReference type="InterPro" id="IPR007118">
    <property type="entry name" value="Expan_Lol_pI"/>
</dbReference>
<dbReference type="InterPro" id="IPR007112">
    <property type="entry name" value="Expansin/allergen_DPBB_dom"/>
</dbReference>
<dbReference type="InterPro" id="IPR007117">
    <property type="entry name" value="Expansin_CBD"/>
</dbReference>
<dbReference type="InterPro" id="IPR036749">
    <property type="entry name" value="Expansin_CBD_sf"/>
</dbReference>
<dbReference type="InterPro" id="IPR005795">
    <property type="entry name" value="LolPI"/>
</dbReference>
<dbReference type="InterPro" id="IPR009009">
    <property type="entry name" value="RlpA-like_DPBB"/>
</dbReference>
<dbReference type="InterPro" id="IPR036908">
    <property type="entry name" value="RlpA-like_sf"/>
</dbReference>
<dbReference type="PANTHER" id="PTHR31692:SF21">
    <property type="entry name" value="EXPANSIN-B1"/>
    <property type="match status" value="1"/>
</dbReference>
<dbReference type="PANTHER" id="PTHR31692">
    <property type="entry name" value="EXPANSIN-B3"/>
    <property type="match status" value="1"/>
</dbReference>
<dbReference type="Pfam" id="PF03330">
    <property type="entry name" value="DPBB_1"/>
    <property type="match status" value="1"/>
</dbReference>
<dbReference type="Pfam" id="PF01357">
    <property type="entry name" value="Expansin_C"/>
    <property type="match status" value="1"/>
</dbReference>
<dbReference type="PRINTS" id="PR01225">
    <property type="entry name" value="EXPANSNFAMLY"/>
</dbReference>
<dbReference type="PRINTS" id="PR00829">
    <property type="entry name" value="LOLP1ALLERGN"/>
</dbReference>
<dbReference type="SMART" id="SM00837">
    <property type="entry name" value="DPBB_1"/>
    <property type="match status" value="1"/>
</dbReference>
<dbReference type="SUPFAM" id="SSF50685">
    <property type="entry name" value="Barwin-like endoglucanases"/>
    <property type="match status" value="1"/>
</dbReference>
<dbReference type="SUPFAM" id="SSF49590">
    <property type="entry name" value="PHL pollen allergen"/>
    <property type="match status" value="1"/>
</dbReference>
<dbReference type="PROSITE" id="PS50843">
    <property type="entry name" value="EXPANSIN_CBD"/>
    <property type="match status" value="1"/>
</dbReference>
<dbReference type="PROSITE" id="PS50842">
    <property type="entry name" value="EXPANSIN_EG45"/>
    <property type="match status" value="1"/>
</dbReference>
<comment type="subcellular location">
    <subcellularLocation>
        <location>Secreted</location>
    </subcellularLocation>
</comment>
<comment type="allergen">
    <text evidence="4">Causes an allergic reaction in human. Causes grass pollen allergy. Binds to IgE.</text>
</comment>
<comment type="similarity">
    <text evidence="5">Belongs to the expansin family. Expansin B subfamily.</text>
</comment>